<comment type="similarity">
    <text evidence="1">Belongs to the small heat shock protein (HSP20) family.</text>
</comment>
<name>HS30C_XENLA</name>
<accession>P30218</accession>
<gene>
    <name type="primary">hsp30c</name>
</gene>
<protein>
    <recommendedName>
        <fullName>Heat shock protein 30C</fullName>
    </recommendedName>
</protein>
<organism>
    <name type="scientific">Xenopus laevis</name>
    <name type="common">African clawed frog</name>
    <dbReference type="NCBI Taxonomy" id="8355"/>
    <lineage>
        <taxon>Eukaryota</taxon>
        <taxon>Metazoa</taxon>
        <taxon>Chordata</taxon>
        <taxon>Craniata</taxon>
        <taxon>Vertebrata</taxon>
        <taxon>Euteleostomi</taxon>
        <taxon>Amphibia</taxon>
        <taxon>Batrachia</taxon>
        <taxon>Anura</taxon>
        <taxon>Pipoidea</taxon>
        <taxon>Pipidae</taxon>
        <taxon>Xenopodinae</taxon>
        <taxon>Xenopus</taxon>
        <taxon>Xenopus</taxon>
    </lineage>
</organism>
<sequence length="213" mass="24199">MFPLSLVQPSHSPLCPCSQPALTLWPATRLIFGHLEDDILSMRNDMERRMQRVNEACRLLSKDTEMRRITDQNRQSRESEGTSPNSGKDGKDHFELTLNVRDFSPHELTVKTQGRRVIVTGKHERKSDTEDGNYFHEYREWKREAELPESVNPEQVVCSLSKNGHLHIQAPRLALPPAPETPIPISMDTAPRDAQELPPDAQTSNAEGDQKVD</sequence>
<keyword id="KW-1185">Reference proteome</keyword>
<keyword id="KW-0346">Stress response</keyword>
<proteinExistence type="inferred from homology"/>
<reference key="1">
    <citation type="journal article" date="1992" name="Gene">
        <title>Comparison of regulatory and structural regions of the Xenopus laevis small heat-shock protein-encoding gene family.</title>
        <authorList>
            <person name="Krone P.H."/>
            <person name="Snow A."/>
            <person name="Ali A."/>
            <person name="Pasternak J.J."/>
            <person name="Heikkila J.J."/>
        </authorList>
    </citation>
    <scope>NUCLEOTIDE SEQUENCE [GENOMIC DNA]</scope>
</reference>
<feature type="chain" id="PRO_0000125954" description="Heat shock protein 30C">
    <location>
        <begin position="1"/>
        <end position="213"/>
    </location>
</feature>
<feature type="domain" description="sHSP" evidence="1">
    <location>
        <begin position="76"/>
        <end position="188"/>
    </location>
</feature>
<feature type="region of interest" description="Disordered" evidence="2">
    <location>
        <begin position="61"/>
        <end position="93"/>
    </location>
</feature>
<feature type="region of interest" description="Disordered" evidence="2">
    <location>
        <begin position="174"/>
        <end position="213"/>
    </location>
</feature>
<feature type="compositionally biased region" description="Basic and acidic residues" evidence="2">
    <location>
        <begin position="61"/>
        <end position="80"/>
    </location>
</feature>
<evidence type="ECO:0000255" key="1">
    <source>
        <dbReference type="PROSITE-ProRule" id="PRU00285"/>
    </source>
</evidence>
<evidence type="ECO:0000256" key="2">
    <source>
        <dbReference type="SAM" id="MobiDB-lite"/>
    </source>
</evidence>
<dbReference type="EMBL" id="X57962">
    <property type="protein sequence ID" value="CAA41030.1"/>
    <property type="molecule type" value="Genomic_DNA"/>
</dbReference>
<dbReference type="PIR" id="JN0274">
    <property type="entry name" value="JN0274"/>
</dbReference>
<dbReference type="RefSeq" id="NP_001165977.1">
    <property type="nucleotide sequence ID" value="NM_001172506.1"/>
</dbReference>
<dbReference type="SMR" id="P30218"/>
<dbReference type="GeneID" id="100379117"/>
<dbReference type="KEGG" id="xla:100379117"/>
<dbReference type="AGR" id="Xenbase:XB-GENE-5764332"/>
<dbReference type="CTD" id="100379117"/>
<dbReference type="Xenbase" id="XB-GENE-5764332">
    <property type="gene designation" value="hsp30c.L"/>
</dbReference>
<dbReference type="OrthoDB" id="8946669at2759"/>
<dbReference type="Proteomes" id="UP000186698">
    <property type="component" value="Chromosome 7L"/>
</dbReference>
<dbReference type="GO" id="GO:0005737">
    <property type="term" value="C:cytoplasm"/>
    <property type="evidence" value="ECO:0000318"/>
    <property type="project" value="GO_Central"/>
</dbReference>
<dbReference type="GO" id="GO:0005634">
    <property type="term" value="C:nucleus"/>
    <property type="evidence" value="ECO:0000318"/>
    <property type="project" value="GO_Central"/>
</dbReference>
<dbReference type="GO" id="GO:0051082">
    <property type="term" value="F:unfolded protein binding"/>
    <property type="evidence" value="ECO:0000318"/>
    <property type="project" value="GO_Central"/>
</dbReference>
<dbReference type="GO" id="GO:0042026">
    <property type="term" value="P:protein refolding"/>
    <property type="evidence" value="ECO:0000318"/>
    <property type="project" value="GO_Central"/>
</dbReference>
<dbReference type="GO" id="GO:0009408">
    <property type="term" value="P:response to heat"/>
    <property type="evidence" value="ECO:0000318"/>
    <property type="project" value="GO_Central"/>
</dbReference>
<dbReference type="CDD" id="cd06481">
    <property type="entry name" value="ACD_HspB9_like"/>
    <property type="match status" value="1"/>
</dbReference>
<dbReference type="Gene3D" id="2.60.40.790">
    <property type="match status" value="1"/>
</dbReference>
<dbReference type="InterPro" id="IPR002068">
    <property type="entry name" value="A-crystallin/Hsp20_dom"/>
</dbReference>
<dbReference type="InterPro" id="IPR001436">
    <property type="entry name" value="Alpha-crystallin/sHSP_animal"/>
</dbReference>
<dbReference type="InterPro" id="IPR008978">
    <property type="entry name" value="HSP20-like_chaperone"/>
</dbReference>
<dbReference type="PANTHER" id="PTHR45640:SF2">
    <property type="entry name" value="HEAT SHOCK PROTEIN BETA-11-RELATED"/>
    <property type="match status" value="1"/>
</dbReference>
<dbReference type="PANTHER" id="PTHR45640">
    <property type="entry name" value="HEAT SHOCK PROTEIN HSP-12.2-RELATED"/>
    <property type="match status" value="1"/>
</dbReference>
<dbReference type="Pfam" id="PF00011">
    <property type="entry name" value="HSP20"/>
    <property type="match status" value="1"/>
</dbReference>
<dbReference type="PRINTS" id="PR00299">
    <property type="entry name" value="ACRYSTALLIN"/>
</dbReference>
<dbReference type="SUPFAM" id="SSF49764">
    <property type="entry name" value="HSP20-like chaperones"/>
    <property type="match status" value="1"/>
</dbReference>
<dbReference type="PROSITE" id="PS01031">
    <property type="entry name" value="SHSP"/>
    <property type="match status" value="1"/>
</dbReference>